<gene>
    <name evidence="1" type="primary">dnaJ</name>
    <name type="ordered locus">PBPRA0698</name>
</gene>
<accession>Q6LUA6</accession>
<evidence type="ECO:0000255" key="1">
    <source>
        <dbReference type="HAMAP-Rule" id="MF_01152"/>
    </source>
</evidence>
<keyword id="KW-0143">Chaperone</keyword>
<keyword id="KW-0963">Cytoplasm</keyword>
<keyword id="KW-0235">DNA replication</keyword>
<keyword id="KW-0479">Metal-binding</keyword>
<keyword id="KW-1185">Reference proteome</keyword>
<keyword id="KW-0677">Repeat</keyword>
<keyword id="KW-0346">Stress response</keyword>
<keyword id="KW-0862">Zinc</keyword>
<keyword id="KW-0863">Zinc-finger</keyword>
<protein>
    <recommendedName>
        <fullName evidence="1">Chaperone protein DnaJ</fullName>
    </recommendedName>
</protein>
<comment type="function">
    <text evidence="1">Participates actively in the response to hyperosmotic and heat shock by preventing the aggregation of stress-denatured proteins and by disaggregating proteins, also in an autonomous, DnaK-independent fashion. Unfolded proteins bind initially to DnaJ; upon interaction with the DnaJ-bound protein, DnaK hydrolyzes its bound ATP, resulting in the formation of a stable complex. GrpE releases ADP from DnaK; ATP binding to DnaK triggers the release of the substrate protein, thus completing the reaction cycle. Several rounds of ATP-dependent interactions between DnaJ, DnaK and GrpE are required for fully efficient folding. Also involved, together with DnaK and GrpE, in the DNA replication of plasmids through activation of initiation proteins.</text>
</comment>
<comment type="cofactor">
    <cofactor evidence="1">
        <name>Zn(2+)</name>
        <dbReference type="ChEBI" id="CHEBI:29105"/>
    </cofactor>
    <text evidence="1">Binds 2 Zn(2+) ions per monomer.</text>
</comment>
<comment type="subunit">
    <text evidence="1">Homodimer.</text>
</comment>
<comment type="subcellular location">
    <subcellularLocation>
        <location evidence="1">Cytoplasm</location>
    </subcellularLocation>
</comment>
<comment type="domain">
    <text evidence="1">The J domain is necessary and sufficient to stimulate DnaK ATPase activity. Zinc center 1 plays an important role in the autonomous, DnaK-independent chaperone activity of DnaJ. Zinc center 2 is essential for interaction with DnaK and for DnaJ activity.</text>
</comment>
<comment type="similarity">
    <text evidence="1">Belongs to the DnaJ family.</text>
</comment>
<dbReference type="EMBL" id="CR378665">
    <property type="protein sequence ID" value="CAG19119.1"/>
    <property type="molecule type" value="Genomic_DNA"/>
</dbReference>
<dbReference type="RefSeq" id="WP_011217465.1">
    <property type="nucleotide sequence ID" value="NC_006370.1"/>
</dbReference>
<dbReference type="SMR" id="Q6LUA6"/>
<dbReference type="STRING" id="298386.PBPRA0698"/>
<dbReference type="KEGG" id="ppr:PBPRA0698"/>
<dbReference type="eggNOG" id="COG0484">
    <property type="taxonomic scope" value="Bacteria"/>
</dbReference>
<dbReference type="HOGENOM" id="CLU_017633_0_7_6"/>
<dbReference type="Proteomes" id="UP000000593">
    <property type="component" value="Chromosome 1"/>
</dbReference>
<dbReference type="GO" id="GO:0005737">
    <property type="term" value="C:cytoplasm"/>
    <property type="evidence" value="ECO:0007669"/>
    <property type="project" value="UniProtKB-SubCell"/>
</dbReference>
<dbReference type="GO" id="GO:0005524">
    <property type="term" value="F:ATP binding"/>
    <property type="evidence" value="ECO:0007669"/>
    <property type="project" value="InterPro"/>
</dbReference>
<dbReference type="GO" id="GO:0031072">
    <property type="term" value="F:heat shock protein binding"/>
    <property type="evidence" value="ECO:0007669"/>
    <property type="project" value="InterPro"/>
</dbReference>
<dbReference type="GO" id="GO:0051082">
    <property type="term" value="F:unfolded protein binding"/>
    <property type="evidence" value="ECO:0007669"/>
    <property type="project" value="UniProtKB-UniRule"/>
</dbReference>
<dbReference type="GO" id="GO:0008270">
    <property type="term" value="F:zinc ion binding"/>
    <property type="evidence" value="ECO:0007669"/>
    <property type="project" value="UniProtKB-UniRule"/>
</dbReference>
<dbReference type="GO" id="GO:0051085">
    <property type="term" value="P:chaperone cofactor-dependent protein refolding"/>
    <property type="evidence" value="ECO:0007669"/>
    <property type="project" value="TreeGrafter"/>
</dbReference>
<dbReference type="GO" id="GO:0006260">
    <property type="term" value="P:DNA replication"/>
    <property type="evidence" value="ECO:0007669"/>
    <property type="project" value="UniProtKB-KW"/>
</dbReference>
<dbReference type="GO" id="GO:0042026">
    <property type="term" value="P:protein refolding"/>
    <property type="evidence" value="ECO:0007669"/>
    <property type="project" value="TreeGrafter"/>
</dbReference>
<dbReference type="GO" id="GO:0009408">
    <property type="term" value="P:response to heat"/>
    <property type="evidence" value="ECO:0007669"/>
    <property type="project" value="InterPro"/>
</dbReference>
<dbReference type="CDD" id="cd06257">
    <property type="entry name" value="DnaJ"/>
    <property type="match status" value="1"/>
</dbReference>
<dbReference type="CDD" id="cd10747">
    <property type="entry name" value="DnaJ_C"/>
    <property type="match status" value="1"/>
</dbReference>
<dbReference type="CDD" id="cd10719">
    <property type="entry name" value="DnaJ_zf"/>
    <property type="match status" value="1"/>
</dbReference>
<dbReference type="FunFam" id="1.10.287.110:FF:000031">
    <property type="entry name" value="Molecular chaperone DnaJ"/>
    <property type="match status" value="1"/>
</dbReference>
<dbReference type="FunFam" id="2.10.230.10:FF:000002">
    <property type="entry name" value="Molecular chaperone DnaJ"/>
    <property type="match status" value="1"/>
</dbReference>
<dbReference type="FunFam" id="2.60.260.20:FF:000004">
    <property type="entry name" value="Molecular chaperone DnaJ"/>
    <property type="match status" value="1"/>
</dbReference>
<dbReference type="Gene3D" id="1.10.287.110">
    <property type="entry name" value="DnaJ domain"/>
    <property type="match status" value="1"/>
</dbReference>
<dbReference type="Gene3D" id="2.10.230.10">
    <property type="entry name" value="Heat shock protein DnaJ, cysteine-rich domain"/>
    <property type="match status" value="1"/>
</dbReference>
<dbReference type="Gene3D" id="2.60.260.20">
    <property type="entry name" value="Urease metallochaperone UreE, N-terminal domain"/>
    <property type="match status" value="2"/>
</dbReference>
<dbReference type="HAMAP" id="MF_01152">
    <property type="entry name" value="DnaJ"/>
    <property type="match status" value="1"/>
</dbReference>
<dbReference type="InterPro" id="IPR012724">
    <property type="entry name" value="DnaJ"/>
</dbReference>
<dbReference type="InterPro" id="IPR002939">
    <property type="entry name" value="DnaJ_C"/>
</dbReference>
<dbReference type="InterPro" id="IPR001623">
    <property type="entry name" value="DnaJ_domain"/>
</dbReference>
<dbReference type="InterPro" id="IPR018253">
    <property type="entry name" value="DnaJ_domain_CS"/>
</dbReference>
<dbReference type="InterPro" id="IPR008971">
    <property type="entry name" value="HSP40/DnaJ_pept-bd"/>
</dbReference>
<dbReference type="InterPro" id="IPR001305">
    <property type="entry name" value="HSP_DnaJ_Cys-rich_dom"/>
</dbReference>
<dbReference type="InterPro" id="IPR036410">
    <property type="entry name" value="HSP_DnaJ_Cys-rich_dom_sf"/>
</dbReference>
<dbReference type="InterPro" id="IPR036869">
    <property type="entry name" value="J_dom_sf"/>
</dbReference>
<dbReference type="NCBIfam" id="TIGR02349">
    <property type="entry name" value="DnaJ_bact"/>
    <property type="match status" value="1"/>
</dbReference>
<dbReference type="NCBIfam" id="NF008035">
    <property type="entry name" value="PRK10767.1"/>
    <property type="match status" value="1"/>
</dbReference>
<dbReference type="PANTHER" id="PTHR43096:SF48">
    <property type="entry name" value="CHAPERONE PROTEIN DNAJ"/>
    <property type="match status" value="1"/>
</dbReference>
<dbReference type="PANTHER" id="PTHR43096">
    <property type="entry name" value="DNAJ HOMOLOG 1, MITOCHONDRIAL-RELATED"/>
    <property type="match status" value="1"/>
</dbReference>
<dbReference type="Pfam" id="PF00226">
    <property type="entry name" value="DnaJ"/>
    <property type="match status" value="1"/>
</dbReference>
<dbReference type="Pfam" id="PF01556">
    <property type="entry name" value="DnaJ_C"/>
    <property type="match status" value="1"/>
</dbReference>
<dbReference type="Pfam" id="PF00684">
    <property type="entry name" value="DnaJ_CXXCXGXG"/>
    <property type="match status" value="1"/>
</dbReference>
<dbReference type="PRINTS" id="PR00625">
    <property type="entry name" value="JDOMAIN"/>
</dbReference>
<dbReference type="SMART" id="SM00271">
    <property type="entry name" value="DnaJ"/>
    <property type="match status" value="1"/>
</dbReference>
<dbReference type="SUPFAM" id="SSF46565">
    <property type="entry name" value="Chaperone J-domain"/>
    <property type="match status" value="1"/>
</dbReference>
<dbReference type="SUPFAM" id="SSF57938">
    <property type="entry name" value="DnaJ/Hsp40 cysteine-rich domain"/>
    <property type="match status" value="1"/>
</dbReference>
<dbReference type="SUPFAM" id="SSF49493">
    <property type="entry name" value="HSP40/DnaJ peptide-binding domain"/>
    <property type="match status" value="2"/>
</dbReference>
<dbReference type="PROSITE" id="PS00636">
    <property type="entry name" value="DNAJ_1"/>
    <property type="match status" value="1"/>
</dbReference>
<dbReference type="PROSITE" id="PS50076">
    <property type="entry name" value="DNAJ_2"/>
    <property type="match status" value="1"/>
</dbReference>
<dbReference type="PROSITE" id="PS51188">
    <property type="entry name" value="ZF_CR"/>
    <property type="match status" value="1"/>
</dbReference>
<sequence length="380" mass="40802">MSKRDFYEVLGVGRDAGERDIKKAYKRLAMKFHPDRNQEADATEKFKEVKTAYEILTDPQKKAAYDQYGHAAFEQGSGGGGYGGGGGADFGDIFGDVFGDIFGGAGGGRRQQQRAQRGSDLRYNMELTLEEAVRGCSKEIRVPTLVGCDSCDGSGAKRGSSATTCGTCHGQGQVQMRQGFFAVQQACPHCHGRGKIIKDPCNSCHGQGRVEKTKTLSVKIPAGVDTGDRIRLSGEGEAGEFGAPAGDLYVQVHVAEHSIFERDGNNLYCEVPVSFTMAAVGGEVEVPTLNGRVNLKVPSETQTGRMFRMRGKGVKSVRGGAVGDLICKLVVETPVNLSSHQKELLKELEESFGGKAAGKHKPKSEGFFNGVKKFFDDLTG</sequence>
<feature type="chain" id="PRO_0000070851" description="Chaperone protein DnaJ">
    <location>
        <begin position="1"/>
        <end position="380"/>
    </location>
</feature>
<feature type="domain" description="J" evidence="1">
    <location>
        <begin position="5"/>
        <end position="69"/>
    </location>
</feature>
<feature type="repeat" description="CXXCXGXG motif">
    <location>
        <begin position="148"/>
        <end position="155"/>
    </location>
</feature>
<feature type="repeat" description="CXXCXGXG motif">
    <location>
        <begin position="165"/>
        <end position="172"/>
    </location>
</feature>
<feature type="repeat" description="CXXCXGXG motif">
    <location>
        <begin position="187"/>
        <end position="194"/>
    </location>
</feature>
<feature type="repeat" description="CXXCXGXG motif">
    <location>
        <begin position="201"/>
        <end position="208"/>
    </location>
</feature>
<feature type="zinc finger region" description="CR-type" evidence="1">
    <location>
        <begin position="135"/>
        <end position="213"/>
    </location>
</feature>
<feature type="binding site" evidence="1">
    <location>
        <position position="148"/>
    </location>
    <ligand>
        <name>Zn(2+)</name>
        <dbReference type="ChEBI" id="CHEBI:29105"/>
        <label>1</label>
    </ligand>
</feature>
<feature type="binding site" evidence="1">
    <location>
        <position position="151"/>
    </location>
    <ligand>
        <name>Zn(2+)</name>
        <dbReference type="ChEBI" id="CHEBI:29105"/>
        <label>1</label>
    </ligand>
</feature>
<feature type="binding site" evidence="1">
    <location>
        <position position="165"/>
    </location>
    <ligand>
        <name>Zn(2+)</name>
        <dbReference type="ChEBI" id="CHEBI:29105"/>
        <label>2</label>
    </ligand>
</feature>
<feature type="binding site" evidence="1">
    <location>
        <position position="168"/>
    </location>
    <ligand>
        <name>Zn(2+)</name>
        <dbReference type="ChEBI" id="CHEBI:29105"/>
        <label>2</label>
    </ligand>
</feature>
<feature type="binding site" evidence="1">
    <location>
        <position position="187"/>
    </location>
    <ligand>
        <name>Zn(2+)</name>
        <dbReference type="ChEBI" id="CHEBI:29105"/>
        <label>2</label>
    </ligand>
</feature>
<feature type="binding site" evidence="1">
    <location>
        <position position="190"/>
    </location>
    <ligand>
        <name>Zn(2+)</name>
        <dbReference type="ChEBI" id="CHEBI:29105"/>
        <label>2</label>
    </ligand>
</feature>
<feature type="binding site" evidence="1">
    <location>
        <position position="201"/>
    </location>
    <ligand>
        <name>Zn(2+)</name>
        <dbReference type="ChEBI" id="CHEBI:29105"/>
        <label>1</label>
    </ligand>
</feature>
<feature type="binding site" evidence="1">
    <location>
        <position position="204"/>
    </location>
    <ligand>
        <name>Zn(2+)</name>
        <dbReference type="ChEBI" id="CHEBI:29105"/>
        <label>1</label>
    </ligand>
</feature>
<organism>
    <name type="scientific">Photobacterium profundum (strain SS9)</name>
    <dbReference type="NCBI Taxonomy" id="298386"/>
    <lineage>
        <taxon>Bacteria</taxon>
        <taxon>Pseudomonadati</taxon>
        <taxon>Pseudomonadota</taxon>
        <taxon>Gammaproteobacteria</taxon>
        <taxon>Vibrionales</taxon>
        <taxon>Vibrionaceae</taxon>
        <taxon>Photobacterium</taxon>
    </lineage>
</organism>
<reference key="1">
    <citation type="journal article" date="2005" name="Science">
        <title>Life at depth: Photobacterium profundum genome sequence and expression analysis.</title>
        <authorList>
            <person name="Vezzi A."/>
            <person name="Campanaro S."/>
            <person name="D'Angelo M."/>
            <person name="Simonato F."/>
            <person name="Vitulo N."/>
            <person name="Lauro F.M."/>
            <person name="Cestaro A."/>
            <person name="Malacrida G."/>
            <person name="Simionati B."/>
            <person name="Cannata N."/>
            <person name="Romualdi C."/>
            <person name="Bartlett D.H."/>
            <person name="Valle G."/>
        </authorList>
    </citation>
    <scope>NUCLEOTIDE SEQUENCE [LARGE SCALE GENOMIC DNA]</scope>
    <source>
        <strain>ATCC BAA-1253 / SS9</strain>
    </source>
</reference>
<proteinExistence type="inferred from homology"/>
<name>DNAJ_PHOPR</name>